<keyword id="KW-1003">Cell membrane</keyword>
<keyword id="KW-0134">Cell wall</keyword>
<keyword id="KW-0961">Cell wall biogenesis/degradation</keyword>
<keyword id="KW-0328">Glycosyltransferase</keyword>
<keyword id="KW-0472">Membrane</keyword>
<keyword id="KW-1185">Reference proteome</keyword>
<keyword id="KW-0964">Secreted</keyword>
<keyword id="KW-0808">Transferase</keyword>
<evidence type="ECO:0000269" key="1">
    <source>
    </source>
</evidence>
<evidence type="ECO:0000269" key="2">
    <source>
    </source>
</evidence>
<evidence type="ECO:0000269" key="3">
    <source>
    </source>
</evidence>
<evidence type="ECO:0000305" key="4"/>
<evidence type="ECO:0000305" key="5">
    <source>
    </source>
</evidence>
<evidence type="ECO:0000305" key="6">
    <source>
    </source>
</evidence>
<evidence type="ECO:0000312" key="7">
    <source>
        <dbReference type="EMBL" id="CCP46611.1"/>
    </source>
</evidence>
<comment type="function">
    <text evidence="1">Involved in the biosynthesis of the arabinogalactan (AG) region of the mycolylarabinogalactan-peptidoglycan (mAGP) complex, an essential component of the mycobacterial cell wall. Catalyzes the transfer of the first two galactofuranosyl (Galf) units from UDP-galactofuranose (UDP-Galf) onto the rhamnosyl-GlcNAc-diphospho-decaprenol (Rha-GlcNAc-PP-C50) acceptor, yielding galactofuranosyl-galactofuranosyl-rhamnosyl-GlcNAc-diphospho-decaprenol (Galf-Galf-Rha-GlcNAc-PP-C50). Thus, GlfT1 is the initiator of galactan synthesis, while GlfT2 continues with the subsequent polymerization events.</text>
</comment>
<comment type="catalytic activity">
    <reaction evidence="1">
        <text>alpha-L-rhamnosyl-(1-&gt;3)-N-acetyl-alpha-D-glucosaminyl-diphospho-trans,octa-cis-decaprenol + 2 UDP-alpha-D-galactofuranose = beta-D-galactofuranosyl-(1-&gt;5)-beta-D-galactofuranosyl-(1-&gt;4)-alpha-L-rhamnosyl-(1-&gt;3)-N-acetyl-alpha-D-glucosaminyl-diphospho-trans,octa-cis-decaprenol + 2 UDP + 2 H(+)</text>
        <dbReference type="Rhea" id="RHEA:34379"/>
        <dbReference type="ChEBI" id="CHEBI:15378"/>
        <dbReference type="ChEBI" id="CHEBI:58223"/>
        <dbReference type="ChEBI" id="CHEBI:66915"/>
        <dbReference type="ChEBI" id="CHEBI:67209"/>
        <dbReference type="ChEBI" id="CHEBI:67210"/>
        <dbReference type="EC" id="2.4.1.287"/>
    </reaction>
</comment>
<comment type="biophysicochemical properties">
    <kinetics>
        <KM evidence="2">2.6 mM for O-decenyl beta-D-Galf(1-&gt;6)-beta-D-Galf (at 37 degrees Celsius)</KM>
        <KM evidence="2">3.77 mM for O-decenyl beta-D-Galf(1-&gt;5)-beta-D-Galf (at 37 degrees Celsius)</KM>
    </kinetics>
</comment>
<comment type="pathway">
    <text evidence="5">Cell wall biogenesis; cell wall polysaccharide biosynthesis.</text>
</comment>
<comment type="subunit">
    <text evidence="3">Interacts with Rv3789. Is thus probably part of an AG biosynthetic complex.</text>
</comment>
<comment type="subcellular location">
    <subcellularLocation>
        <location evidence="1">Cell membrane</location>
    </subcellularLocation>
    <subcellularLocation>
        <location evidence="1">Secreted</location>
        <location evidence="1">Cell wall</location>
    </subcellularLocation>
</comment>
<comment type="miscellaneous">
    <text evidence="6">Was identified as a high-confidence drug target.</text>
</comment>
<comment type="similarity">
    <text evidence="4">Belongs to the glycosyltransferase 2 family.</text>
</comment>
<name>GLFT1_MYCTU</name>
<accession>P9WMX3</accession>
<accession>L0TGJ5</accession>
<accession>Q79F98</accession>
<accession>Q7D4V6</accession>
<protein>
    <recommendedName>
        <fullName evidence="4">Galactofuranosyltransferase GlfT1</fullName>
        <shortName evidence="4">GalTr 1</shortName>
        <ecNumber evidence="1">2.4.1.287</ecNumber>
    </recommendedName>
    <alternativeName>
        <fullName evidence="4">Arabinogalactan galactosyltransferase 1</fullName>
    </alternativeName>
    <alternativeName>
        <fullName>Rhamnopyranosyl-N-acetylglucosaminyl-diphospho-decaprenol beta-1,4/1,5-galactofuranosyltransferase</fullName>
    </alternativeName>
    <alternativeName>
        <fullName>UDP-Galf:alpha-3-L-rhamnosyl-alpha-D-GlcNAc-pyrophosphate polyprenol, galactofuranosyl transferase</fullName>
    </alternativeName>
</protein>
<reference key="1">
    <citation type="journal article" date="1998" name="Nature">
        <title>Deciphering the biology of Mycobacterium tuberculosis from the complete genome sequence.</title>
        <authorList>
            <person name="Cole S.T."/>
            <person name="Brosch R."/>
            <person name="Parkhill J."/>
            <person name="Garnier T."/>
            <person name="Churcher C.M."/>
            <person name="Harris D.E."/>
            <person name="Gordon S.V."/>
            <person name="Eiglmeier K."/>
            <person name="Gas S."/>
            <person name="Barry C.E. III"/>
            <person name="Tekaia F."/>
            <person name="Badcock K."/>
            <person name="Basham D."/>
            <person name="Brown D."/>
            <person name="Chillingworth T."/>
            <person name="Connor R."/>
            <person name="Davies R.M."/>
            <person name="Devlin K."/>
            <person name="Feltwell T."/>
            <person name="Gentles S."/>
            <person name="Hamlin N."/>
            <person name="Holroyd S."/>
            <person name="Hornsby T."/>
            <person name="Jagels K."/>
            <person name="Krogh A."/>
            <person name="McLean J."/>
            <person name="Moule S."/>
            <person name="Murphy L.D."/>
            <person name="Oliver S."/>
            <person name="Osborne J."/>
            <person name="Quail M.A."/>
            <person name="Rajandream M.A."/>
            <person name="Rogers J."/>
            <person name="Rutter S."/>
            <person name="Seeger K."/>
            <person name="Skelton S."/>
            <person name="Squares S."/>
            <person name="Squares R."/>
            <person name="Sulston J.E."/>
            <person name="Taylor K."/>
            <person name="Whitehead S."/>
            <person name="Barrell B.G."/>
        </authorList>
    </citation>
    <scope>NUCLEOTIDE SEQUENCE [LARGE SCALE GENOMIC DNA]</scope>
    <source>
        <strain>ATCC 25618 / H37Rv</strain>
    </source>
</reference>
<reference key="2">
    <citation type="journal article" date="2006" name="J. Bacteriol.">
        <title>Identification of a novel galactosyl transferase involved in biosynthesis of the mycobacterial cell wall.</title>
        <authorList>
            <person name="Mikusova K."/>
            <person name="Belanova M."/>
            <person name="Kordulakova J."/>
            <person name="Honda K."/>
            <person name="McNeil M.R."/>
            <person name="Mahapatra S."/>
            <person name="Crick D.C."/>
            <person name="Brennan P.J."/>
        </authorList>
    </citation>
    <scope>FUNCTION</scope>
    <scope>CATALYTIC ACTIVITY</scope>
    <scope>SUBCELLULAR LOCATION</scope>
    <scope>PATHWAY</scope>
    <source>
        <strain>H37Rv</strain>
    </source>
</reference>
<reference key="3">
    <citation type="journal article" date="2008" name="BMC Syst. Biol.">
        <title>targetTB: a target identification pipeline for Mycobacterium tuberculosis through an interactome, reactome and genome-scale structural analysis.</title>
        <authorList>
            <person name="Raman K."/>
            <person name="Yeturu K."/>
            <person name="Chandra N."/>
        </authorList>
    </citation>
    <scope>IDENTIFICATION AS A DRUG TARGET [LARGE SCALE ANALYSIS]</scope>
</reference>
<reference key="4">
    <citation type="journal article" date="2008" name="Protein Expr. Purif.">
        <title>Expression, purification and characterisation of soluble GlfT and the identification of a novel galactofuranosyltransferase Rv3782 involved in priming GlfT-mediated galactan polymerisation in Mycobacterium tuberculosis.</title>
        <authorList>
            <person name="Alderwick L.J."/>
            <person name="Dover L.G."/>
            <person name="Veerapen N."/>
            <person name="Gurcha S.S."/>
            <person name="Kremer L."/>
            <person name="Roper D.L."/>
            <person name="Pathak A.K."/>
            <person name="Reynolds R.C."/>
            <person name="Besra G.S."/>
        </authorList>
    </citation>
    <scope>FUNCTION AS A GALACTOFURANOSYLTRANSFERASE</scope>
    <scope>BIOPHYSICOCHEMICAL PROPERTIES</scope>
    <source>
        <strain>H37Rv</strain>
    </source>
</reference>
<reference key="5">
    <citation type="journal article" date="2011" name="Mol. Cell. Proteomics">
        <title>Proteogenomic analysis of Mycobacterium tuberculosis by high resolution mass spectrometry.</title>
        <authorList>
            <person name="Kelkar D.S."/>
            <person name="Kumar D."/>
            <person name="Kumar P."/>
            <person name="Balakrishnan L."/>
            <person name="Muthusamy B."/>
            <person name="Yadav A.K."/>
            <person name="Shrivastava P."/>
            <person name="Marimuthu A."/>
            <person name="Anand S."/>
            <person name="Sundaram H."/>
            <person name="Kingsbury R."/>
            <person name="Harsha H.C."/>
            <person name="Nair B."/>
            <person name="Prasad T.S."/>
            <person name="Chauhan D.S."/>
            <person name="Katoch K."/>
            <person name="Katoch V.M."/>
            <person name="Kumar P."/>
            <person name="Chaerkady R."/>
            <person name="Ramachandran S."/>
            <person name="Dash D."/>
            <person name="Pandey A."/>
        </authorList>
    </citation>
    <scope>IDENTIFICATION BY MASS SPECTROMETRY [LARGE SCALE ANALYSIS]</scope>
    <source>
        <strain>ATCC 25618 / H37Rv</strain>
    </source>
</reference>
<reference key="6">
    <citation type="journal article" date="2012" name="J. Biol. Chem.">
        <title>A small multidrug resistance-like transporter involved in the arabinosylation of arabinogalactan and lipoarabinomannan in mycobacteria.</title>
        <authorList>
            <person name="Larrouy-Maumus G."/>
            <person name="Skovierova H."/>
            <person name="Dhouib R."/>
            <person name="Angala S.K."/>
            <person name="Zuberogoitia S."/>
            <person name="Pham H."/>
            <person name="Villela A.D."/>
            <person name="Mikusova K."/>
            <person name="Noguera A."/>
            <person name="Gilleron M."/>
            <person name="Valentinova L."/>
            <person name="Kordulakova J."/>
            <person name="Brennan P.J."/>
            <person name="Puzo G."/>
            <person name="Nigou J."/>
            <person name="Jackson M."/>
        </authorList>
    </citation>
    <scope>INTERACTION WITH RV3789</scope>
    <source>
        <strain>ATCC 25618 / H37Rv</strain>
    </source>
</reference>
<gene>
    <name evidence="7" type="primary">glfT1</name>
    <name type="ordered locus">Rv3782</name>
</gene>
<feature type="chain" id="PRO_0000395355" description="Galactofuranosyltransferase GlfT1">
    <location>
        <begin position="1"/>
        <end position="304"/>
    </location>
</feature>
<dbReference type="EC" id="2.4.1.287" evidence="1"/>
<dbReference type="EMBL" id="AL123456">
    <property type="protein sequence ID" value="CCP46611.1"/>
    <property type="molecule type" value="Genomic_DNA"/>
</dbReference>
<dbReference type="PIR" id="B70696">
    <property type="entry name" value="B70696"/>
</dbReference>
<dbReference type="RefSeq" id="WP_003420606.1">
    <property type="nucleotide sequence ID" value="NZ_NVQJ01000009.1"/>
</dbReference>
<dbReference type="RefSeq" id="YP_178014.1">
    <property type="nucleotide sequence ID" value="NC_000962.3"/>
</dbReference>
<dbReference type="SMR" id="P9WMX3"/>
<dbReference type="FunCoup" id="P9WMX3">
    <property type="interactions" value="13"/>
</dbReference>
<dbReference type="STRING" id="83332.Rv3782"/>
<dbReference type="PaxDb" id="83332-Rv3782"/>
<dbReference type="DNASU" id="886114"/>
<dbReference type="GeneID" id="886114"/>
<dbReference type="KEGG" id="mtu:Rv3782"/>
<dbReference type="KEGG" id="mtv:RVBD_3782"/>
<dbReference type="TubercuList" id="Rv3782"/>
<dbReference type="eggNOG" id="COG1216">
    <property type="taxonomic scope" value="Bacteria"/>
</dbReference>
<dbReference type="InParanoid" id="P9WMX3"/>
<dbReference type="OrthoDB" id="7665907at2"/>
<dbReference type="PhylomeDB" id="P9WMX3"/>
<dbReference type="BioCyc" id="MetaCyc:G185E-8078-MONOMER"/>
<dbReference type="BRENDA" id="2.4.1.287">
    <property type="organism ID" value="3445"/>
</dbReference>
<dbReference type="UniPathway" id="UPA00963"/>
<dbReference type="Proteomes" id="UP000001584">
    <property type="component" value="Chromosome"/>
</dbReference>
<dbReference type="GO" id="GO:0005576">
    <property type="term" value="C:extracellular region"/>
    <property type="evidence" value="ECO:0007669"/>
    <property type="project" value="UniProtKB-KW"/>
</dbReference>
<dbReference type="GO" id="GO:0005886">
    <property type="term" value="C:plasma membrane"/>
    <property type="evidence" value="ECO:0007005"/>
    <property type="project" value="MTBBASE"/>
</dbReference>
<dbReference type="GO" id="GO:0008378">
    <property type="term" value="F:galactosyltransferase activity"/>
    <property type="evidence" value="ECO:0000314"/>
    <property type="project" value="MTBBASE"/>
</dbReference>
<dbReference type="GO" id="GO:0016757">
    <property type="term" value="F:glycosyltransferase activity"/>
    <property type="evidence" value="ECO:0000314"/>
    <property type="project" value="UniProtKB"/>
</dbReference>
<dbReference type="GO" id="GO:0016740">
    <property type="term" value="F:transferase activity"/>
    <property type="evidence" value="ECO:0000314"/>
    <property type="project" value="UniProtKB"/>
</dbReference>
<dbReference type="GO" id="GO:0045227">
    <property type="term" value="P:capsule polysaccharide biosynthetic process"/>
    <property type="evidence" value="ECO:0007669"/>
    <property type="project" value="UniProtKB-UniPathway"/>
</dbReference>
<dbReference type="GO" id="GO:0044038">
    <property type="term" value="P:cell wall macromolecule biosynthetic process"/>
    <property type="evidence" value="ECO:0000314"/>
    <property type="project" value="UniProtKB"/>
</dbReference>
<dbReference type="GO" id="GO:0071555">
    <property type="term" value="P:cell wall organization"/>
    <property type="evidence" value="ECO:0000314"/>
    <property type="project" value="UniProtKB"/>
</dbReference>
<dbReference type="FunFam" id="3.90.550.60:FF:000002">
    <property type="entry name" value="Galactofuranosyl transferase GlfT1"/>
    <property type="match status" value="1"/>
</dbReference>
<dbReference type="Gene3D" id="3.90.550.60">
    <property type="match status" value="1"/>
</dbReference>
<dbReference type="InterPro" id="IPR001173">
    <property type="entry name" value="Glyco_trans_2-like"/>
</dbReference>
<dbReference type="InterPro" id="IPR029044">
    <property type="entry name" value="Nucleotide-diphossugar_trans"/>
</dbReference>
<dbReference type="PANTHER" id="PTHR43179:SF12">
    <property type="entry name" value="GALACTOFURANOSYLTRANSFERASE GLFT2"/>
    <property type="match status" value="1"/>
</dbReference>
<dbReference type="PANTHER" id="PTHR43179">
    <property type="entry name" value="RHAMNOSYLTRANSFERASE WBBL"/>
    <property type="match status" value="1"/>
</dbReference>
<dbReference type="Pfam" id="PF00535">
    <property type="entry name" value="Glycos_transf_2"/>
    <property type="match status" value="1"/>
</dbReference>
<dbReference type="SUPFAM" id="SSF53448">
    <property type="entry name" value="Nucleotide-diphospho-sugar transferases"/>
    <property type="match status" value="1"/>
</dbReference>
<organism>
    <name type="scientific">Mycobacterium tuberculosis (strain ATCC 25618 / H37Rv)</name>
    <dbReference type="NCBI Taxonomy" id="83332"/>
    <lineage>
        <taxon>Bacteria</taxon>
        <taxon>Bacillati</taxon>
        <taxon>Actinomycetota</taxon>
        <taxon>Actinomycetes</taxon>
        <taxon>Mycobacteriales</taxon>
        <taxon>Mycobacteriaceae</taxon>
        <taxon>Mycobacterium</taxon>
        <taxon>Mycobacterium tuberculosis complex</taxon>
    </lineage>
</organism>
<sequence>MTESVFAVVVTHRRPDELAKSLDVLTAQTRLPDHLIVVDNDGCGDSPVRELVAGQPIATTYLGSRRNLGGAGGFALGMLHALAQGADWVWLADDDGHAQDARVLATLLACAEKYSLAEVSPMVCNIDDPTRLAFPLRRGLVWRRRASELRTEAGQELLPGIASLFNGALFRASTLAAIGVPDLRLFIRGDEVEMHRRLIRSGLPFGTCLDAAYLHPCGSDEFKPILCGRMHAQYPDDPGKRFFTYRNRGYVLSQPGLRKLLAQEWLRFGWFFLVTRRDPKGLWEWIRLRRLGRREKFGKPGGSA</sequence>
<proteinExistence type="evidence at protein level"/>